<proteinExistence type="inferred from homology"/>
<organism>
    <name type="scientific">Francisella philomiragia subsp. philomiragia (strain ATCC 25017 / CCUG 19701 / FSC 153 / O#319-036)</name>
    <dbReference type="NCBI Taxonomy" id="484022"/>
    <lineage>
        <taxon>Bacteria</taxon>
        <taxon>Pseudomonadati</taxon>
        <taxon>Pseudomonadota</taxon>
        <taxon>Gammaproteobacteria</taxon>
        <taxon>Thiotrichales</taxon>
        <taxon>Francisellaceae</taxon>
        <taxon>Francisella</taxon>
    </lineage>
</organism>
<protein>
    <recommendedName>
        <fullName evidence="1">Aminomethyltransferase</fullName>
        <ecNumber evidence="1">2.1.2.10</ecNumber>
    </recommendedName>
    <alternativeName>
        <fullName evidence="1">Glycine cleavage system T protein</fullName>
    </alternativeName>
</protein>
<dbReference type="EC" id="2.1.2.10" evidence="1"/>
<dbReference type="EMBL" id="CP000937">
    <property type="protein sequence ID" value="ABZ86557.1"/>
    <property type="molecule type" value="Genomic_DNA"/>
</dbReference>
<dbReference type="SMR" id="B0TZJ8"/>
<dbReference type="KEGG" id="fph:Fphi_0340"/>
<dbReference type="eggNOG" id="COG0404">
    <property type="taxonomic scope" value="Bacteria"/>
</dbReference>
<dbReference type="HOGENOM" id="CLU_007884_10_2_6"/>
<dbReference type="GO" id="GO:0005829">
    <property type="term" value="C:cytosol"/>
    <property type="evidence" value="ECO:0007669"/>
    <property type="project" value="TreeGrafter"/>
</dbReference>
<dbReference type="GO" id="GO:0005960">
    <property type="term" value="C:glycine cleavage complex"/>
    <property type="evidence" value="ECO:0007669"/>
    <property type="project" value="InterPro"/>
</dbReference>
<dbReference type="GO" id="GO:0004047">
    <property type="term" value="F:aminomethyltransferase activity"/>
    <property type="evidence" value="ECO:0007669"/>
    <property type="project" value="UniProtKB-UniRule"/>
</dbReference>
<dbReference type="GO" id="GO:0008483">
    <property type="term" value="F:transaminase activity"/>
    <property type="evidence" value="ECO:0007669"/>
    <property type="project" value="UniProtKB-KW"/>
</dbReference>
<dbReference type="GO" id="GO:0019464">
    <property type="term" value="P:glycine decarboxylation via glycine cleavage system"/>
    <property type="evidence" value="ECO:0007669"/>
    <property type="project" value="UniProtKB-UniRule"/>
</dbReference>
<dbReference type="FunFam" id="3.30.70.1400:FF:000001">
    <property type="entry name" value="Aminomethyltransferase"/>
    <property type="match status" value="1"/>
</dbReference>
<dbReference type="Gene3D" id="2.40.30.110">
    <property type="entry name" value="Aminomethyltransferase beta-barrel domains"/>
    <property type="match status" value="1"/>
</dbReference>
<dbReference type="Gene3D" id="3.30.70.1400">
    <property type="entry name" value="Aminomethyltransferase beta-barrel domains"/>
    <property type="match status" value="1"/>
</dbReference>
<dbReference type="Gene3D" id="4.10.1250.10">
    <property type="entry name" value="Aminomethyltransferase fragment"/>
    <property type="match status" value="1"/>
</dbReference>
<dbReference type="Gene3D" id="3.30.1360.120">
    <property type="entry name" value="Probable tRNA modification gtpase trme, domain 1"/>
    <property type="match status" value="1"/>
</dbReference>
<dbReference type="HAMAP" id="MF_00259">
    <property type="entry name" value="GcvT"/>
    <property type="match status" value="1"/>
</dbReference>
<dbReference type="InterPro" id="IPR006223">
    <property type="entry name" value="GCS_T"/>
</dbReference>
<dbReference type="InterPro" id="IPR022903">
    <property type="entry name" value="GCS_T_bac"/>
</dbReference>
<dbReference type="InterPro" id="IPR013977">
    <property type="entry name" value="GCST_C"/>
</dbReference>
<dbReference type="InterPro" id="IPR006222">
    <property type="entry name" value="GCV_T_N"/>
</dbReference>
<dbReference type="InterPro" id="IPR028896">
    <property type="entry name" value="GcvT/YgfZ/DmdA"/>
</dbReference>
<dbReference type="InterPro" id="IPR029043">
    <property type="entry name" value="GcvT/YgfZ_C"/>
</dbReference>
<dbReference type="InterPro" id="IPR027266">
    <property type="entry name" value="TrmE/GcvT_dom1"/>
</dbReference>
<dbReference type="NCBIfam" id="TIGR00528">
    <property type="entry name" value="gcvT"/>
    <property type="match status" value="1"/>
</dbReference>
<dbReference type="NCBIfam" id="NF001567">
    <property type="entry name" value="PRK00389.1"/>
    <property type="match status" value="1"/>
</dbReference>
<dbReference type="PANTHER" id="PTHR43757">
    <property type="entry name" value="AMINOMETHYLTRANSFERASE"/>
    <property type="match status" value="1"/>
</dbReference>
<dbReference type="PANTHER" id="PTHR43757:SF2">
    <property type="entry name" value="AMINOMETHYLTRANSFERASE, MITOCHONDRIAL"/>
    <property type="match status" value="1"/>
</dbReference>
<dbReference type="Pfam" id="PF01571">
    <property type="entry name" value="GCV_T"/>
    <property type="match status" value="1"/>
</dbReference>
<dbReference type="Pfam" id="PF08669">
    <property type="entry name" value="GCV_T_C"/>
    <property type="match status" value="1"/>
</dbReference>
<dbReference type="PIRSF" id="PIRSF006487">
    <property type="entry name" value="GcvT"/>
    <property type="match status" value="1"/>
</dbReference>
<dbReference type="SUPFAM" id="SSF101790">
    <property type="entry name" value="Aminomethyltransferase beta-barrel domain"/>
    <property type="match status" value="1"/>
</dbReference>
<dbReference type="SUPFAM" id="SSF103025">
    <property type="entry name" value="Folate-binding domain"/>
    <property type="match status" value="1"/>
</dbReference>
<evidence type="ECO:0000255" key="1">
    <source>
        <dbReference type="HAMAP-Rule" id="MF_00259"/>
    </source>
</evidence>
<feature type="chain" id="PRO_1000078587" description="Aminomethyltransferase">
    <location>
        <begin position="1"/>
        <end position="358"/>
    </location>
</feature>
<comment type="function">
    <text evidence="1">The glycine cleavage system catalyzes the degradation of glycine.</text>
</comment>
<comment type="catalytic activity">
    <reaction evidence="1">
        <text>N(6)-[(R)-S(8)-aminomethyldihydrolipoyl]-L-lysyl-[protein] + (6S)-5,6,7,8-tetrahydrofolate = N(6)-[(R)-dihydrolipoyl]-L-lysyl-[protein] + (6R)-5,10-methylene-5,6,7,8-tetrahydrofolate + NH4(+)</text>
        <dbReference type="Rhea" id="RHEA:16945"/>
        <dbReference type="Rhea" id="RHEA-COMP:10475"/>
        <dbReference type="Rhea" id="RHEA-COMP:10492"/>
        <dbReference type="ChEBI" id="CHEBI:15636"/>
        <dbReference type="ChEBI" id="CHEBI:28938"/>
        <dbReference type="ChEBI" id="CHEBI:57453"/>
        <dbReference type="ChEBI" id="CHEBI:83100"/>
        <dbReference type="ChEBI" id="CHEBI:83143"/>
        <dbReference type="EC" id="2.1.2.10"/>
    </reaction>
</comment>
<comment type="subunit">
    <text evidence="1">The glycine cleavage system is composed of four proteins: P, T, L and H.</text>
</comment>
<comment type="similarity">
    <text evidence="1">Belongs to the GcvT family.</text>
</comment>
<reference key="1">
    <citation type="submission" date="2007-12" db="EMBL/GenBank/DDBJ databases">
        <title>Complete sequence of chromosome of Francisella philomiragia subsp. philomiragia ATCC 25017.</title>
        <authorList>
            <consortium name="US DOE Joint Genome Institute"/>
            <person name="Copeland A."/>
            <person name="Lucas S."/>
            <person name="Lapidus A."/>
            <person name="Barry K."/>
            <person name="Detter J.C."/>
            <person name="Glavina del Rio T."/>
            <person name="Hammon N."/>
            <person name="Israni S."/>
            <person name="Dalin E."/>
            <person name="Tice H."/>
            <person name="Pitluck S."/>
            <person name="Chain P."/>
            <person name="Malfatti S."/>
            <person name="Shin M."/>
            <person name="Vergez L."/>
            <person name="Schmutz J."/>
            <person name="Larimer F."/>
            <person name="Land M."/>
            <person name="Hauser L."/>
            <person name="Richardson P."/>
        </authorList>
    </citation>
    <scope>NUCLEOTIDE SEQUENCE [LARGE SCALE GENOMIC DNA]</scope>
    <source>
        <strain>ATCC 25017 / CCUG 19701 / FSC 153 / O#319-036</strain>
    </source>
</reference>
<keyword id="KW-0032">Aminotransferase</keyword>
<keyword id="KW-0808">Transferase</keyword>
<accession>B0TZJ8</accession>
<gene>
    <name evidence="1" type="primary">gcvT</name>
    <name type="ordered locus">Fphi_0340</name>
</gene>
<sequence length="358" mass="39592">MLKTPLYESHLAANAKMVDFSGWSMPINYGSQIQEHNNVRENCGVFDVSHMLAVDIQGKDAEKFLRHILANDVAKLEAGKAQYGCMLNHEAGIVDDLITYKIDSENFRIVVNAGNRESDVAWFRENSQDLDVKITPQQNLAIVAVQGPKAVEIVKHTVTTEVAEEIAKLKPFTFKFFSNWMFARTGYTGEDGFEIMLPADQVADFWDNLLENGAEPAGLGARDTLRLEAGMHLYGSDMNTTTTPLERGLGWSVDLSDENRDFIGKKAYLTKKSHGITTKWTGVVLKSKGVLRAGQEIDFDNGEKGYITSGSFSPTLKVAIALAYVPKEGANPIVNIRGKELEVELVKAKFVKNGQSLI</sequence>
<name>GCST_FRAP2</name>